<comment type="function">
    <text evidence="1">Activates ribosomal RNA transcription. Plays a direct role in upstream activation of rRNA promoters.</text>
</comment>
<comment type="subunit">
    <text evidence="1">Homodimer.</text>
</comment>
<comment type="similarity">
    <text evidence="1">Belongs to the transcriptional regulatory Fis family.</text>
</comment>
<gene>
    <name evidence="1" type="primary">fis</name>
    <name type="ordered locus">Ssed_4119</name>
</gene>
<name>FIS_SHESH</name>
<protein>
    <recommendedName>
        <fullName evidence="1">DNA-binding protein Fis</fullName>
    </recommendedName>
</protein>
<organism>
    <name type="scientific">Shewanella sediminis (strain HAW-EB3)</name>
    <dbReference type="NCBI Taxonomy" id="425104"/>
    <lineage>
        <taxon>Bacteria</taxon>
        <taxon>Pseudomonadati</taxon>
        <taxon>Pseudomonadota</taxon>
        <taxon>Gammaproteobacteria</taxon>
        <taxon>Alteromonadales</taxon>
        <taxon>Shewanellaceae</taxon>
        <taxon>Shewanella</taxon>
    </lineage>
</organism>
<accession>A8G0V0</accession>
<reference key="1">
    <citation type="submission" date="2007-08" db="EMBL/GenBank/DDBJ databases">
        <title>Complete sequence of Shewanella sediminis HAW-EB3.</title>
        <authorList>
            <consortium name="US DOE Joint Genome Institute"/>
            <person name="Copeland A."/>
            <person name="Lucas S."/>
            <person name="Lapidus A."/>
            <person name="Barry K."/>
            <person name="Glavina del Rio T."/>
            <person name="Dalin E."/>
            <person name="Tice H."/>
            <person name="Pitluck S."/>
            <person name="Chertkov O."/>
            <person name="Brettin T."/>
            <person name="Bruce D."/>
            <person name="Detter J.C."/>
            <person name="Han C."/>
            <person name="Schmutz J."/>
            <person name="Larimer F."/>
            <person name="Land M."/>
            <person name="Hauser L."/>
            <person name="Kyrpides N."/>
            <person name="Kim E."/>
            <person name="Zhao J.-S."/>
            <person name="Richardson P."/>
        </authorList>
    </citation>
    <scope>NUCLEOTIDE SEQUENCE [LARGE SCALE GENOMIC DNA]</scope>
    <source>
        <strain>HAW-EB3</strain>
    </source>
</reference>
<proteinExistence type="inferred from homology"/>
<keyword id="KW-0010">Activator</keyword>
<keyword id="KW-0238">DNA-binding</keyword>
<keyword id="KW-1185">Reference proteome</keyword>
<keyword id="KW-0804">Transcription</keyword>
<keyword id="KW-0805">Transcription regulation</keyword>
<sequence>MFDQTTNTETHQLTVGKIETANGTIKPQLLRDAVKRAVTNFFAQMDGQEAEEVYEMVLSEVEAPLLDIIMQHTRGNQTRAANMLGINRGTLRKKLKKYGMN</sequence>
<dbReference type="EMBL" id="CP000821">
    <property type="protein sequence ID" value="ABV38723.1"/>
    <property type="molecule type" value="Genomic_DNA"/>
</dbReference>
<dbReference type="RefSeq" id="WP_005496187.1">
    <property type="nucleotide sequence ID" value="NC_009831.1"/>
</dbReference>
<dbReference type="SMR" id="A8G0V0"/>
<dbReference type="STRING" id="425104.Ssed_4119"/>
<dbReference type="KEGG" id="sse:Ssed_4119"/>
<dbReference type="eggNOG" id="COG2901">
    <property type="taxonomic scope" value="Bacteria"/>
</dbReference>
<dbReference type="HOGENOM" id="CLU_158040_3_3_6"/>
<dbReference type="OrthoDB" id="9802388at2"/>
<dbReference type="Proteomes" id="UP000002015">
    <property type="component" value="Chromosome"/>
</dbReference>
<dbReference type="GO" id="GO:0003700">
    <property type="term" value="F:DNA-binding transcription factor activity"/>
    <property type="evidence" value="ECO:0007669"/>
    <property type="project" value="UniProtKB-UniRule"/>
</dbReference>
<dbReference type="GO" id="GO:0043565">
    <property type="term" value="F:sequence-specific DNA binding"/>
    <property type="evidence" value="ECO:0007669"/>
    <property type="project" value="InterPro"/>
</dbReference>
<dbReference type="FunFam" id="1.10.10.60:FF:000006">
    <property type="entry name" value="DNA-binding protein Fis"/>
    <property type="match status" value="1"/>
</dbReference>
<dbReference type="Gene3D" id="1.10.10.60">
    <property type="entry name" value="Homeodomain-like"/>
    <property type="match status" value="1"/>
</dbReference>
<dbReference type="HAMAP" id="MF_00166">
    <property type="entry name" value="DNA_binding_Fis"/>
    <property type="match status" value="1"/>
</dbReference>
<dbReference type="InterPro" id="IPR005412">
    <property type="entry name" value="Fis_DNA-bd"/>
</dbReference>
<dbReference type="InterPro" id="IPR009057">
    <property type="entry name" value="Homeodomain-like_sf"/>
</dbReference>
<dbReference type="InterPro" id="IPR002197">
    <property type="entry name" value="HTH_Fis"/>
</dbReference>
<dbReference type="InterPro" id="IPR050207">
    <property type="entry name" value="Trans_regulatory_Fis"/>
</dbReference>
<dbReference type="NCBIfam" id="NF001659">
    <property type="entry name" value="PRK00430.1"/>
    <property type="match status" value="1"/>
</dbReference>
<dbReference type="PANTHER" id="PTHR47918">
    <property type="entry name" value="DNA-BINDING PROTEIN FIS"/>
    <property type="match status" value="1"/>
</dbReference>
<dbReference type="PANTHER" id="PTHR47918:SF1">
    <property type="entry name" value="DNA-BINDING PROTEIN FIS"/>
    <property type="match status" value="1"/>
</dbReference>
<dbReference type="Pfam" id="PF02954">
    <property type="entry name" value="HTH_8"/>
    <property type="match status" value="1"/>
</dbReference>
<dbReference type="PIRSF" id="PIRSF002097">
    <property type="entry name" value="DNA-binding_Fis"/>
    <property type="match status" value="1"/>
</dbReference>
<dbReference type="PRINTS" id="PR01591">
    <property type="entry name" value="DNABINDNGFIS"/>
</dbReference>
<dbReference type="PRINTS" id="PR01590">
    <property type="entry name" value="HTHFIS"/>
</dbReference>
<dbReference type="SUPFAM" id="SSF46689">
    <property type="entry name" value="Homeodomain-like"/>
    <property type="match status" value="1"/>
</dbReference>
<evidence type="ECO:0000255" key="1">
    <source>
        <dbReference type="HAMAP-Rule" id="MF_00166"/>
    </source>
</evidence>
<feature type="chain" id="PRO_1000076987" description="DNA-binding protein Fis">
    <location>
        <begin position="1"/>
        <end position="101"/>
    </location>
</feature>
<feature type="DNA-binding region" description="H-T-H motif" evidence="1">
    <location>
        <begin position="77"/>
        <end position="96"/>
    </location>
</feature>